<reference key="1">
    <citation type="journal article" date="1999" name="Nature">
        <title>Evidence for lateral gene transfer between Archaea and Bacteria from genome sequence of Thermotoga maritima.</title>
        <authorList>
            <person name="Nelson K.E."/>
            <person name="Clayton R.A."/>
            <person name="Gill S.R."/>
            <person name="Gwinn M.L."/>
            <person name="Dodson R.J."/>
            <person name="Haft D.H."/>
            <person name="Hickey E.K."/>
            <person name="Peterson J.D."/>
            <person name="Nelson W.C."/>
            <person name="Ketchum K.A."/>
            <person name="McDonald L.A."/>
            <person name="Utterback T.R."/>
            <person name="Malek J.A."/>
            <person name="Linher K.D."/>
            <person name="Garrett M.M."/>
            <person name="Stewart A.M."/>
            <person name="Cotton M.D."/>
            <person name="Pratt M.S."/>
            <person name="Phillips C.A."/>
            <person name="Richardson D.L."/>
            <person name="Heidelberg J.F."/>
            <person name="Sutton G.G."/>
            <person name="Fleischmann R.D."/>
            <person name="Eisen J.A."/>
            <person name="White O."/>
            <person name="Salzberg S.L."/>
            <person name="Smith H.O."/>
            <person name="Venter J.C."/>
            <person name="Fraser C.M."/>
        </authorList>
    </citation>
    <scope>NUCLEOTIDE SEQUENCE [LARGE SCALE GENOMIC DNA]</scope>
    <source>
        <strain>ATCC 43589 / DSM 3109 / JCM 10099 / NBRC 100826 / MSB8</strain>
    </source>
</reference>
<comment type="function">
    <text evidence="1">Catalyzes the specific phosphorylation of the 3-hydroxyl group of shikimic acid using ATP as a cosubstrate.</text>
</comment>
<comment type="catalytic activity">
    <reaction>
        <text>7-phospho-2-dehydro-3-deoxy-D-arabino-heptonate = 3-dehydroquinate + phosphate</text>
        <dbReference type="Rhea" id="RHEA:21968"/>
        <dbReference type="ChEBI" id="CHEBI:32364"/>
        <dbReference type="ChEBI" id="CHEBI:43474"/>
        <dbReference type="ChEBI" id="CHEBI:58394"/>
        <dbReference type="EC" id="4.2.3.4"/>
    </reaction>
</comment>
<comment type="catalytic activity">
    <reaction>
        <text>shikimate + ATP = 3-phosphoshikimate + ADP + H(+)</text>
        <dbReference type="Rhea" id="RHEA:13121"/>
        <dbReference type="ChEBI" id="CHEBI:15378"/>
        <dbReference type="ChEBI" id="CHEBI:30616"/>
        <dbReference type="ChEBI" id="CHEBI:36208"/>
        <dbReference type="ChEBI" id="CHEBI:145989"/>
        <dbReference type="ChEBI" id="CHEBI:456216"/>
        <dbReference type="EC" id="2.7.1.71"/>
    </reaction>
</comment>
<comment type="cofactor">
    <cofactor evidence="1">
        <name>Mg(2+)</name>
        <dbReference type="ChEBI" id="CHEBI:18420"/>
    </cofactor>
    <text evidence="1">Binds 1 Mg(2+) ion per subunit.</text>
</comment>
<comment type="cofactor">
    <cofactor evidence="1">
        <name>NAD(+)</name>
        <dbReference type="ChEBI" id="CHEBI:57540"/>
    </cofactor>
</comment>
<comment type="cofactor">
    <cofactor evidence="1">
        <name>a divalent metal cation</name>
        <dbReference type="ChEBI" id="CHEBI:60240"/>
    </cofactor>
</comment>
<comment type="pathway">
    <text>Metabolic intermediate biosynthesis; chorismate biosynthesis; chorismate from D-erythrose 4-phosphate and phosphoenolpyruvate: step 2/7.</text>
</comment>
<comment type="pathway">
    <text>Metabolic intermediate biosynthesis; chorismate biosynthesis; chorismate from D-erythrose 4-phosphate and phosphoenolpyruvate: step 5/7.</text>
</comment>
<comment type="subcellular location">
    <subcellularLocation>
        <location evidence="1">Cytoplasm</location>
    </subcellularLocation>
</comment>
<comment type="similarity">
    <text evidence="2">In the N-terminal section; belongs to the shikimate kinase family.</text>
</comment>
<comment type="similarity">
    <text evidence="2">In the C-terminal section; belongs to the sugar phosphate cyclases superfamily. Dehydroquinate synthase family.</text>
</comment>
<feature type="chain" id="PRO_0000192432" description="Bifunctional shikimate kinase/3-dehydroquinate synthase">
    <location>
        <begin position="1"/>
        <end position="492"/>
    </location>
</feature>
<feature type="region of interest" description="Shikimate kinase">
    <location>
        <begin position="1"/>
        <end position="161"/>
    </location>
</feature>
<feature type="region of interest" description="3-dehydroquinate synthase">
    <location>
        <begin position="162"/>
        <end position="492"/>
    </location>
</feature>
<feature type="binding site" evidence="1">
    <location>
        <begin position="10"/>
        <end position="15"/>
    </location>
    <ligand>
        <name>ATP</name>
        <dbReference type="ChEBI" id="CHEBI:30616"/>
    </ligand>
</feature>
<feature type="binding site" evidence="1">
    <location>
        <position position="14"/>
    </location>
    <ligand>
        <name>Mg(2+)</name>
        <dbReference type="ChEBI" id="CHEBI:18420"/>
    </ligand>
</feature>
<feature type="binding site" evidence="1">
    <location>
        <position position="32"/>
    </location>
    <ligand>
        <name>substrate</name>
    </ligand>
</feature>
<feature type="binding site" evidence="1">
    <location>
        <position position="56"/>
    </location>
    <ligand>
        <name>substrate</name>
    </ligand>
</feature>
<feature type="binding site" evidence="1">
    <location>
        <position position="78"/>
    </location>
    <ligand>
        <name>substrate</name>
    </ligand>
</feature>
<feature type="binding site" evidence="1">
    <location>
        <position position="114"/>
    </location>
    <ligand>
        <name>ATP</name>
        <dbReference type="ChEBI" id="CHEBI:30616"/>
    </ligand>
</feature>
<feature type="binding site" evidence="1">
    <location>
        <position position="131"/>
    </location>
    <ligand>
        <name>substrate</name>
    </ligand>
</feature>
<name>AROKB_THEMA</name>
<evidence type="ECO:0000250" key="1"/>
<evidence type="ECO:0000305" key="2"/>
<organism>
    <name type="scientific">Thermotoga maritima (strain ATCC 43589 / DSM 3109 / JCM 10099 / NBRC 100826 / MSB8)</name>
    <dbReference type="NCBI Taxonomy" id="243274"/>
    <lineage>
        <taxon>Bacteria</taxon>
        <taxon>Thermotogati</taxon>
        <taxon>Thermotogota</taxon>
        <taxon>Thermotogae</taxon>
        <taxon>Thermotogales</taxon>
        <taxon>Thermotogaceae</taxon>
        <taxon>Thermotoga</taxon>
    </lineage>
</organism>
<sequence>MRIFLVGMMGSGKSTIGKRISEVLDLQFIDMDEEIERREGRSVRRIFEEDGEEYFRLKEKELLKELVERDNVVVATGGGVVVDPENRELLKKEKTLFLYAPPEVLMERVTTENRPLLSEGKERIREIWEKRKQFYAEFRRIDTSRLNEWETTALVVLEALDEKEISTIEKPHLVKIILGGFKRVRNEELVFTTERVEKIYGRYLPENRLLFPDGEEVKTLEHVSRAYYELIRMDFPRGKTIAGVGGGALTDFTGFVASTFKRGVGLSFYPTTLLAQVDASVGGKNAIDFAGVKNVVGTFRMPDYVIIDPTVTLSMDEGRFEEGVVEAFKMTILSGRGVELFDEPEKIEKRNLRVLSEMVKISVEEKARIVMEDPYDMGLRHALNLGHTLGHVYEMLEGVPHGIAVAWGIEKETMYLYRKGIVPKETMRWIVEKVKQIVPIPVPSVDVEKARNLILNDKKILKGSRVRLPYVKEIGKIEFLEVDPLELLEVVD</sequence>
<keyword id="KW-0028">Amino-acid biosynthesis</keyword>
<keyword id="KW-0057">Aromatic amino acid biosynthesis</keyword>
<keyword id="KW-0067">ATP-binding</keyword>
<keyword id="KW-0963">Cytoplasm</keyword>
<keyword id="KW-0418">Kinase</keyword>
<keyword id="KW-0456">Lyase</keyword>
<keyword id="KW-0460">Magnesium</keyword>
<keyword id="KW-0479">Metal-binding</keyword>
<keyword id="KW-0511">Multifunctional enzyme</keyword>
<keyword id="KW-0520">NAD</keyword>
<keyword id="KW-0547">Nucleotide-binding</keyword>
<keyword id="KW-1185">Reference proteome</keyword>
<keyword id="KW-0808">Transferase</keyword>
<protein>
    <recommendedName>
        <fullName>Bifunctional shikimate kinase/3-dehydroquinate synthase</fullName>
    </recommendedName>
    <domain>
        <recommendedName>
            <fullName>Shikimate kinase</fullName>
            <shortName>SK</shortName>
            <ecNumber>2.7.1.71</ecNumber>
        </recommendedName>
    </domain>
    <domain>
        <recommendedName>
            <fullName>3-dehydroquinate synthase</fullName>
            <ecNumber>4.2.3.4</ecNumber>
        </recommendedName>
    </domain>
</protein>
<accession>Q9WYI3</accession>
<proteinExistence type="inferred from homology"/>
<gene>
    <name type="primary">aroKB</name>
    <name type="ordered locus">TM_0348</name>
</gene>
<dbReference type="EC" id="2.7.1.71"/>
<dbReference type="EC" id="4.2.3.4"/>
<dbReference type="EMBL" id="AE000512">
    <property type="protein sequence ID" value="AAD35434.1"/>
    <property type="molecule type" value="Genomic_DNA"/>
</dbReference>
<dbReference type="PIR" id="B72389">
    <property type="entry name" value="B72389"/>
</dbReference>
<dbReference type="RefSeq" id="NP_228159.1">
    <property type="nucleotide sequence ID" value="NC_000853.1"/>
</dbReference>
<dbReference type="SMR" id="Q9WYI3"/>
<dbReference type="FunCoup" id="Q9WYI3">
    <property type="interactions" value="370"/>
</dbReference>
<dbReference type="STRING" id="243274.TM_0348"/>
<dbReference type="PaxDb" id="243274-THEMA_02975"/>
<dbReference type="EnsemblBacteria" id="AAD35434">
    <property type="protein sequence ID" value="AAD35434"/>
    <property type="gene ID" value="TM_0348"/>
</dbReference>
<dbReference type="KEGG" id="tma:TM0348"/>
<dbReference type="KEGG" id="tmm:Tmari_0346"/>
<dbReference type="KEGG" id="tmw:THMA_0356"/>
<dbReference type="eggNOG" id="COG0337">
    <property type="taxonomic scope" value="Bacteria"/>
</dbReference>
<dbReference type="eggNOG" id="COG0703">
    <property type="taxonomic scope" value="Bacteria"/>
</dbReference>
<dbReference type="InParanoid" id="Q9WYI3"/>
<dbReference type="OrthoDB" id="9806583at2"/>
<dbReference type="UniPathway" id="UPA00053">
    <property type="reaction ID" value="UER00085"/>
</dbReference>
<dbReference type="UniPathway" id="UPA00053">
    <property type="reaction ID" value="UER00088"/>
</dbReference>
<dbReference type="Proteomes" id="UP000008183">
    <property type="component" value="Chromosome"/>
</dbReference>
<dbReference type="GO" id="GO:0005737">
    <property type="term" value="C:cytoplasm"/>
    <property type="evidence" value="ECO:0007669"/>
    <property type="project" value="UniProtKB-SubCell"/>
</dbReference>
<dbReference type="GO" id="GO:0003856">
    <property type="term" value="F:3-dehydroquinate synthase activity"/>
    <property type="evidence" value="ECO:0000318"/>
    <property type="project" value="GO_Central"/>
</dbReference>
<dbReference type="GO" id="GO:0005524">
    <property type="term" value="F:ATP binding"/>
    <property type="evidence" value="ECO:0007669"/>
    <property type="project" value="UniProtKB-UniRule"/>
</dbReference>
<dbReference type="GO" id="GO:0000287">
    <property type="term" value="F:magnesium ion binding"/>
    <property type="evidence" value="ECO:0007669"/>
    <property type="project" value="UniProtKB-UniRule"/>
</dbReference>
<dbReference type="GO" id="GO:0004765">
    <property type="term" value="F:shikimate kinase activity"/>
    <property type="evidence" value="ECO:0007669"/>
    <property type="project" value="UniProtKB-UniRule"/>
</dbReference>
<dbReference type="GO" id="GO:0008652">
    <property type="term" value="P:amino acid biosynthetic process"/>
    <property type="evidence" value="ECO:0007669"/>
    <property type="project" value="UniProtKB-KW"/>
</dbReference>
<dbReference type="GO" id="GO:0009073">
    <property type="term" value="P:aromatic amino acid family biosynthetic process"/>
    <property type="evidence" value="ECO:0000318"/>
    <property type="project" value="GO_Central"/>
</dbReference>
<dbReference type="GO" id="GO:0009423">
    <property type="term" value="P:chorismate biosynthetic process"/>
    <property type="evidence" value="ECO:0007669"/>
    <property type="project" value="UniProtKB-UniRule"/>
</dbReference>
<dbReference type="CDD" id="cd08195">
    <property type="entry name" value="DHQS"/>
    <property type="match status" value="1"/>
</dbReference>
<dbReference type="CDD" id="cd00464">
    <property type="entry name" value="SK"/>
    <property type="match status" value="1"/>
</dbReference>
<dbReference type="FunFam" id="3.40.50.1970:FF:000048">
    <property type="match status" value="1"/>
</dbReference>
<dbReference type="Gene3D" id="3.40.50.1970">
    <property type="match status" value="1"/>
</dbReference>
<dbReference type="Gene3D" id="1.20.1090.10">
    <property type="entry name" value="Dehydroquinate synthase-like - alpha domain"/>
    <property type="match status" value="1"/>
</dbReference>
<dbReference type="Gene3D" id="3.40.50.300">
    <property type="entry name" value="P-loop containing nucleotide triphosphate hydrolases"/>
    <property type="match status" value="1"/>
</dbReference>
<dbReference type="HAMAP" id="MF_00109">
    <property type="entry name" value="Shikimate_kinase"/>
    <property type="match status" value="1"/>
</dbReference>
<dbReference type="InterPro" id="IPR050071">
    <property type="entry name" value="Dehydroquinate_synthase"/>
</dbReference>
<dbReference type="InterPro" id="IPR016037">
    <property type="entry name" value="DHQ_synth_AroB"/>
</dbReference>
<dbReference type="InterPro" id="IPR030960">
    <property type="entry name" value="DHQS/DOIS_N"/>
</dbReference>
<dbReference type="InterPro" id="IPR056179">
    <property type="entry name" value="DHQS_C"/>
</dbReference>
<dbReference type="InterPro" id="IPR027417">
    <property type="entry name" value="P-loop_NTPase"/>
</dbReference>
<dbReference type="InterPro" id="IPR031322">
    <property type="entry name" value="Shikimate/glucono_kinase"/>
</dbReference>
<dbReference type="InterPro" id="IPR000623">
    <property type="entry name" value="Shikimate_kinase/TSH1"/>
</dbReference>
<dbReference type="InterPro" id="IPR023000">
    <property type="entry name" value="Shikimate_kinase_CS"/>
</dbReference>
<dbReference type="NCBIfam" id="TIGR01357">
    <property type="entry name" value="aroB"/>
    <property type="match status" value="1"/>
</dbReference>
<dbReference type="NCBIfam" id="NF010556">
    <property type="entry name" value="PRK13951.1"/>
    <property type="match status" value="1"/>
</dbReference>
<dbReference type="PANTHER" id="PTHR43622">
    <property type="entry name" value="3-DEHYDROQUINATE SYNTHASE"/>
    <property type="match status" value="1"/>
</dbReference>
<dbReference type="PANTHER" id="PTHR43622:SF7">
    <property type="entry name" value="3-DEHYDROQUINATE SYNTHASE, CHLOROPLASTIC"/>
    <property type="match status" value="1"/>
</dbReference>
<dbReference type="Pfam" id="PF01761">
    <property type="entry name" value="DHQ_synthase"/>
    <property type="match status" value="1"/>
</dbReference>
<dbReference type="Pfam" id="PF24621">
    <property type="entry name" value="DHQS_C"/>
    <property type="match status" value="1"/>
</dbReference>
<dbReference type="Pfam" id="PF01202">
    <property type="entry name" value="SKI"/>
    <property type="match status" value="1"/>
</dbReference>
<dbReference type="PRINTS" id="PR01100">
    <property type="entry name" value="SHIKIMTKNASE"/>
</dbReference>
<dbReference type="SUPFAM" id="SSF56796">
    <property type="entry name" value="Dehydroquinate synthase-like"/>
    <property type="match status" value="1"/>
</dbReference>
<dbReference type="SUPFAM" id="SSF52540">
    <property type="entry name" value="P-loop containing nucleoside triphosphate hydrolases"/>
    <property type="match status" value="1"/>
</dbReference>
<dbReference type="PROSITE" id="PS01128">
    <property type="entry name" value="SHIKIMATE_KINASE"/>
    <property type="match status" value="1"/>
</dbReference>